<dbReference type="EC" id="1.3.1.98"/>
<dbReference type="EMBL" id="AE000511">
    <property type="protein sequence ID" value="AAD08460.1"/>
    <property type="molecule type" value="Genomic_DNA"/>
</dbReference>
<dbReference type="PIR" id="B64697">
    <property type="entry name" value="B64697"/>
</dbReference>
<dbReference type="RefSeq" id="NP_208209.1">
    <property type="nucleotide sequence ID" value="NC_000915.1"/>
</dbReference>
<dbReference type="RefSeq" id="WP_000894903.1">
    <property type="nucleotide sequence ID" value="NC_018939.1"/>
</dbReference>
<dbReference type="SMR" id="O25963"/>
<dbReference type="FunCoup" id="O25963">
    <property type="interactions" value="348"/>
</dbReference>
<dbReference type="STRING" id="85962.HP_1418"/>
<dbReference type="PaxDb" id="85962-C694_07335"/>
<dbReference type="EnsemblBacteria" id="AAD08460">
    <property type="protein sequence ID" value="AAD08460"/>
    <property type="gene ID" value="HP_1418"/>
</dbReference>
<dbReference type="KEGG" id="heo:C694_07335"/>
<dbReference type="KEGG" id="hpy:HP_1418"/>
<dbReference type="PATRIC" id="fig|85962.47.peg.1522"/>
<dbReference type="eggNOG" id="COG0812">
    <property type="taxonomic scope" value="Bacteria"/>
</dbReference>
<dbReference type="InParanoid" id="O25963"/>
<dbReference type="OrthoDB" id="9804753at2"/>
<dbReference type="PhylomeDB" id="O25963"/>
<dbReference type="UniPathway" id="UPA00219"/>
<dbReference type="Proteomes" id="UP000000429">
    <property type="component" value="Chromosome"/>
</dbReference>
<dbReference type="GO" id="GO:0005829">
    <property type="term" value="C:cytosol"/>
    <property type="evidence" value="ECO:0000318"/>
    <property type="project" value="GO_Central"/>
</dbReference>
<dbReference type="GO" id="GO:0050660">
    <property type="term" value="F:flavin adenine dinucleotide binding"/>
    <property type="evidence" value="ECO:0000318"/>
    <property type="project" value="GO_Central"/>
</dbReference>
<dbReference type="GO" id="GO:0008762">
    <property type="term" value="F:UDP-N-acetylmuramate dehydrogenase activity"/>
    <property type="evidence" value="ECO:0000318"/>
    <property type="project" value="GO_Central"/>
</dbReference>
<dbReference type="GO" id="GO:0051301">
    <property type="term" value="P:cell division"/>
    <property type="evidence" value="ECO:0007669"/>
    <property type="project" value="UniProtKB-KW"/>
</dbReference>
<dbReference type="GO" id="GO:0071555">
    <property type="term" value="P:cell wall organization"/>
    <property type="evidence" value="ECO:0000318"/>
    <property type="project" value="GO_Central"/>
</dbReference>
<dbReference type="GO" id="GO:0009252">
    <property type="term" value="P:peptidoglycan biosynthetic process"/>
    <property type="evidence" value="ECO:0007669"/>
    <property type="project" value="UniProtKB-UniRule"/>
</dbReference>
<dbReference type="GO" id="GO:0008360">
    <property type="term" value="P:regulation of cell shape"/>
    <property type="evidence" value="ECO:0007669"/>
    <property type="project" value="UniProtKB-KW"/>
</dbReference>
<dbReference type="Gene3D" id="3.30.465.10">
    <property type="match status" value="1"/>
</dbReference>
<dbReference type="Gene3D" id="3.90.78.10">
    <property type="entry name" value="UDP-N-acetylenolpyruvoylglucosamine reductase, C-terminal domain"/>
    <property type="match status" value="1"/>
</dbReference>
<dbReference type="HAMAP" id="MF_00037">
    <property type="entry name" value="MurB"/>
    <property type="match status" value="1"/>
</dbReference>
<dbReference type="InterPro" id="IPR036318">
    <property type="entry name" value="FAD-bd_PCMH-like_sf"/>
</dbReference>
<dbReference type="InterPro" id="IPR016169">
    <property type="entry name" value="FAD-bd_PCMH_sub2"/>
</dbReference>
<dbReference type="InterPro" id="IPR003170">
    <property type="entry name" value="MurB"/>
</dbReference>
<dbReference type="InterPro" id="IPR011601">
    <property type="entry name" value="MurB_C"/>
</dbReference>
<dbReference type="InterPro" id="IPR036635">
    <property type="entry name" value="MurB_C_sf"/>
</dbReference>
<dbReference type="NCBIfam" id="TIGR00179">
    <property type="entry name" value="murB"/>
    <property type="match status" value="1"/>
</dbReference>
<dbReference type="NCBIfam" id="NF010479">
    <property type="entry name" value="PRK13904.1"/>
    <property type="match status" value="1"/>
</dbReference>
<dbReference type="PANTHER" id="PTHR21071">
    <property type="entry name" value="UDP-N-ACETYLENOLPYRUVOYLGLUCOSAMINE REDUCTASE"/>
    <property type="match status" value="1"/>
</dbReference>
<dbReference type="PANTHER" id="PTHR21071:SF4">
    <property type="entry name" value="UDP-N-ACETYLENOLPYRUVOYLGLUCOSAMINE REDUCTASE"/>
    <property type="match status" value="1"/>
</dbReference>
<dbReference type="Pfam" id="PF02873">
    <property type="entry name" value="MurB_C"/>
    <property type="match status" value="1"/>
</dbReference>
<dbReference type="SUPFAM" id="SSF56176">
    <property type="entry name" value="FAD-binding/transporter-associated domain-like"/>
    <property type="match status" value="1"/>
</dbReference>
<dbReference type="SUPFAM" id="SSF56194">
    <property type="entry name" value="Uridine diphospho-N-Acetylenolpyruvylglucosamine reductase, MurB, C-terminal domain"/>
    <property type="match status" value="1"/>
</dbReference>
<keyword id="KW-0131">Cell cycle</keyword>
<keyword id="KW-0132">Cell division</keyword>
<keyword id="KW-0133">Cell shape</keyword>
<keyword id="KW-0961">Cell wall biogenesis/degradation</keyword>
<keyword id="KW-0963">Cytoplasm</keyword>
<keyword id="KW-0274">FAD</keyword>
<keyword id="KW-0285">Flavoprotein</keyword>
<keyword id="KW-0521">NADP</keyword>
<keyword id="KW-0560">Oxidoreductase</keyword>
<keyword id="KW-0573">Peptidoglycan synthesis</keyword>
<keyword id="KW-1185">Reference proteome</keyword>
<protein>
    <recommendedName>
        <fullName>UDP-N-acetylenolpyruvoylglucosamine reductase</fullName>
        <ecNumber>1.3.1.98</ecNumber>
    </recommendedName>
    <alternativeName>
        <fullName>UDP-N-acetylmuramate dehydrogenase</fullName>
    </alternativeName>
</protein>
<comment type="function">
    <text evidence="1">Cell wall formation.</text>
</comment>
<comment type="catalytic activity">
    <reaction>
        <text>UDP-N-acetyl-alpha-D-muramate + NADP(+) = UDP-N-acetyl-3-O-(1-carboxyvinyl)-alpha-D-glucosamine + NADPH + H(+)</text>
        <dbReference type="Rhea" id="RHEA:12248"/>
        <dbReference type="ChEBI" id="CHEBI:15378"/>
        <dbReference type="ChEBI" id="CHEBI:57783"/>
        <dbReference type="ChEBI" id="CHEBI:58349"/>
        <dbReference type="ChEBI" id="CHEBI:68483"/>
        <dbReference type="ChEBI" id="CHEBI:70757"/>
        <dbReference type="EC" id="1.3.1.98"/>
    </reaction>
</comment>
<comment type="cofactor">
    <cofactor evidence="1">
        <name>FAD</name>
        <dbReference type="ChEBI" id="CHEBI:57692"/>
    </cofactor>
</comment>
<comment type="pathway">
    <text>Cell wall biogenesis; peptidoglycan biosynthesis.</text>
</comment>
<comment type="subcellular location">
    <subcellularLocation>
        <location evidence="1">Cytoplasm</location>
    </subcellularLocation>
</comment>
<comment type="similarity">
    <text evidence="2">Belongs to the MurB family.</text>
</comment>
<name>MURB_HELPY</name>
<organism>
    <name type="scientific">Helicobacter pylori (strain ATCC 700392 / 26695)</name>
    <name type="common">Campylobacter pylori</name>
    <dbReference type="NCBI Taxonomy" id="85962"/>
    <lineage>
        <taxon>Bacteria</taxon>
        <taxon>Pseudomonadati</taxon>
        <taxon>Campylobacterota</taxon>
        <taxon>Epsilonproteobacteria</taxon>
        <taxon>Campylobacterales</taxon>
        <taxon>Helicobacteraceae</taxon>
        <taxon>Helicobacter</taxon>
    </lineage>
</organism>
<gene>
    <name type="primary">murB</name>
    <name type="ordered locus">HP_1418</name>
</gene>
<sequence length="259" mass="28592">MLETTIDFSRYSSVKIGTPLKVSVLENDDEISQEHQIIGLANNLLIAPSAKNLALLGKNYDYICDKGECVEIGGAANASKIFNYFRANDLEGLEFLGQLPGTLGALVKMNAGMKEFEIKNVLESACINNQWLEKEALGLGYRSSGFSGVVLRARFKKTHGFREGVLKACQSMRKSHPKLPNFGSCFKNPPNDHAGRLLEGVGLRGYCLKRVGFAKEHANFLVNLGGAEFEEALDLIELAKARVLQEYGIHLEEEVKILR</sequence>
<proteinExistence type="inferred from homology"/>
<evidence type="ECO:0000250" key="1"/>
<evidence type="ECO:0000305" key="2"/>
<feature type="chain" id="PRO_0000179218" description="UDP-N-acetylenolpyruvoylglucosamine reductase">
    <location>
        <begin position="1"/>
        <end position="259"/>
    </location>
</feature>
<feature type="active site" evidence="1">
    <location>
        <position position="142"/>
    </location>
</feature>
<feature type="active site" description="Proton donor" evidence="1">
    <location>
        <position position="184"/>
    </location>
</feature>
<feature type="active site" evidence="1">
    <location>
        <position position="254"/>
    </location>
</feature>
<reference key="1">
    <citation type="journal article" date="1997" name="Nature">
        <title>The complete genome sequence of the gastric pathogen Helicobacter pylori.</title>
        <authorList>
            <person name="Tomb J.-F."/>
            <person name="White O."/>
            <person name="Kerlavage A.R."/>
            <person name="Clayton R.A."/>
            <person name="Sutton G.G."/>
            <person name="Fleischmann R.D."/>
            <person name="Ketchum K.A."/>
            <person name="Klenk H.-P."/>
            <person name="Gill S.R."/>
            <person name="Dougherty B.A."/>
            <person name="Nelson K.E."/>
            <person name="Quackenbush J."/>
            <person name="Zhou L."/>
            <person name="Kirkness E.F."/>
            <person name="Peterson S.N."/>
            <person name="Loftus B.J."/>
            <person name="Richardson D.L."/>
            <person name="Dodson R.J."/>
            <person name="Khalak H.G."/>
            <person name="Glodek A."/>
            <person name="McKenney K."/>
            <person name="FitzGerald L.M."/>
            <person name="Lee N."/>
            <person name="Adams M.D."/>
            <person name="Hickey E.K."/>
            <person name="Berg D.E."/>
            <person name="Gocayne J.D."/>
            <person name="Utterback T.R."/>
            <person name="Peterson J.D."/>
            <person name="Kelley J.M."/>
            <person name="Cotton M.D."/>
            <person name="Weidman J.F."/>
            <person name="Fujii C."/>
            <person name="Bowman C."/>
            <person name="Watthey L."/>
            <person name="Wallin E."/>
            <person name="Hayes W.S."/>
            <person name="Borodovsky M."/>
            <person name="Karp P.D."/>
            <person name="Smith H.O."/>
            <person name="Fraser C.M."/>
            <person name="Venter J.C."/>
        </authorList>
    </citation>
    <scope>NUCLEOTIDE SEQUENCE [LARGE SCALE GENOMIC DNA]</scope>
    <source>
        <strain>ATCC 700392 / 26695</strain>
    </source>
</reference>
<accession>O25963</accession>